<evidence type="ECO:0000255" key="1"/>
<evidence type="ECO:0000255" key="2">
    <source>
        <dbReference type="PROSITE-ProRule" id="PRU00521"/>
    </source>
</evidence>
<evidence type="ECO:0000269" key="3">
    <source>
    </source>
</evidence>
<evidence type="ECO:0000269" key="4">
    <source>
    </source>
</evidence>
<evidence type="ECO:0000305" key="5"/>
<evidence type="ECO:0000305" key="6">
    <source>
    </source>
</evidence>
<evidence type="ECO:0000305" key="7">
    <source>
    </source>
</evidence>
<name>GUTR1_DROME</name>
<accession>Q9NDM2</accession>
<accession>Q95NV3</accession>
<accession>Q95NV9</accession>
<accession>Q9NKZ6</accession>
<accession>Q9W498</accession>
<sequence>MDQDMGMATGYFQDADMQMDEPAAATQSIYPHSATLFAAISACVFVTIGVLGNLITLLALLKSPTIREHATTAFVISLSISDLLFCSFSLPLTAVRFFQESWTFGTTLCKIFPVIFYGNVAVSLLSMVGITLNRYILIACHSRYSQIYKPKFITLQLLFVWAVSFLLLLPPILGIWGEMGLDEATFSCTILKKEGRSIKKTLFVIGFLLPCLVIIVSYSCIYITVLHQKKKIRNHDNFQIAAAKGSSSSGGGSYMTTTCTRKAREDNRLTVMMVTIFLCFLVCFLPLMLANVVDDERNTSYPWLHIIASVMAWASSVINPIIYAASNRNYRVAYYKIFALLKFWGEPLSPMPSRNYHQSKNSKELSGVIRSTPLFHAVQKNSINQMCQTYSV</sequence>
<gene>
    <name type="primary">Tre1</name>
    <name type="ORF">CG3171</name>
</gene>
<protein>
    <recommendedName>
        <fullName>Protein trapped in endoderm-1</fullName>
    </recommendedName>
</protein>
<dbReference type="EMBL" id="AB034204">
    <property type="protein sequence ID" value="BAA95353.1"/>
    <property type="molecule type" value="mRNA"/>
</dbReference>
<dbReference type="EMBL" id="AB042625">
    <property type="protein sequence ID" value="BAA96500.1"/>
    <property type="molecule type" value="mRNA"/>
</dbReference>
<dbReference type="EMBL" id="AB066613">
    <property type="protein sequence ID" value="BAB68237.1"/>
    <property type="molecule type" value="Genomic_DNA"/>
</dbReference>
<dbReference type="EMBL" id="AB066614">
    <property type="protein sequence ID" value="BAB68238.1"/>
    <property type="molecule type" value="Genomic_DNA"/>
</dbReference>
<dbReference type="EMBL" id="AB066615">
    <property type="protein sequence ID" value="BAB68239.1"/>
    <property type="molecule type" value="Genomic_DNA"/>
</dbReference>
<dbReference type="EMBL" id="AB066616">
    <property type="protein sequence ID" value="BAB68240.2"/>
    <property type="molecule type" value="Genomic_DNA"/>
</dbReference>
<dbReference type="EMBL" id="AB066617">
    <property type="protein sequence ID" value="BAB68241.1"/>
    <property type="molecule type" value="Genomic_DNA"/>
</dbReference>
<dbReference type="EMBL" id="AB066618">
    <property type="protein sequence ID" value="BAB68242.1"/>
    <property type="molecule type" value="Genomic_DNA"/>
</dbReference>
<dbReference type="EMBL" id="AE014298">
    <property type="protein sequence ID" value="AAF46059.2"/>
    <property type="molecule type" value="Genomic_DNA"/>
</dbReference>
<dbReference type="EMBL" id="AY070980">
    <property type="protein sequence ID" value="AAL48602.1"/>
    <property type="molecule type" value="mRNA"/>
</dbReference>
<dbReference type="RefSeq" id="NP_001245534.1">
    <property type="nucleotide sequence ID" value="NM_001258605.1"/>
</dbReference>
<dbReference type="RefSeq" id="NP_524792.1">
    <property type="nucleotide sequence ID" value="NM_080053.4"/>
</dbReference>
<dbReference type="SMR" id="Q9NDM2"/>
<dbReference type="BioGRID" id="72924">
    <property type="interactions" value="4"/>
</dbReference>
<dbReference type="DIP" id="DIP-23341N"/>
<dbReference type="FunCoup" id="Q9NDM2">
    <property type="interactions" value="57"/>
</dbReference>
<dbReference type="IntAct" id="Q9NDM2">
    <property type="interactions" value="3"/>
</dbReference>
<dbReference type="STRING" id="7227.FBpp0309197"/>
<dbReference type="GlyCosmos" id="Q9NDM2">
    <property type="glycosylation" value="1 site, No reported glycans"/>
</dbReference>
<dbReference type="GlyGen" id="Q9NDM2">
    <property type="glycosylation" value="1 site"/>
</dbReference>
<dbReference type="iPTMnet" id="Q9NDM2"/>
<dbReference type="PaxDb" id="7227-FBpp0070813"/>
<dbReference type="DNASU" id="140439"/>
<dbReference type="EnsemblMetazoa" id="FBtr0070848">
    <property type="protein sequence ID" value="FBpp0070813"/>
    <property type="gene ID" value="FBgn0046687"/>
</dbReference>
<dbReference type="EnsemblMetazoa" id="FBtr0308339">
    <property type="protein sequence ID" value="FBpp0300658"/>
    <property type="gene ID" value="FBgn0046687"/>
</dbReference>
<dbReference type="GeneID" id="140439"/>
<dbReference type="KEGG" id="dme:Dmel_CG3171"/>
<dbReference type="AGR" id="FB:FBgn0046687"/>
<dbReference type="CTD" id="140439"/>
<dbReference type="FlyBase" id="FBgn0046687">
    <property type="gene designation" value="Tre1"/>
</dbReference>
<dbReference type="VEuPathDB" id="VectorBase:FBgn0046687"/>
<dbReference type="eggNOG" id="KOG3656">
    <property type="taxonomic scope" value="Eukaryota"/>
</dbReference>
<dbReference type="GeneTree" id="ENSGT00940000170714"/>
<dbReference type="HOGENOM" id="CLU_009579_3_10_1"/>
<dbReference type="InParanoid" id="Q9NDM2"/>
<dbReference type="OrthoDB" id="6117944at2759"/>
<dbReference type="PhylomeDB" id="Q9NDM2"/>
<dbReference type="Reactome" id="R-DME-373076">
    <property type="pathway name" value="Class A/1 (Rhodopsin-like receptors)"/>
</dbReference>
<dbReference type="Reactome" id="R-DME-375276">
    <property type="pathway name" value="Peptide ligand-binding receptors"/>
</dbReference>
<dbReference type="Reactome" id="R-DME-416476">
    <property type="pathway name" value="G alpha (q) signalling events"/>
</dbReference>
<dbReference type="Reactome" id="R-DME-418555">
    <property type="pathway name" value="G alpha (s) signalling events"/>
</dbReference>
<dbReference type="Reactome" id="R-DME-418594">
    <property type="pathway name" value="G alpha (i) signalling events"/>
</dbReference>
<dbReference type="Reactome" id="R-DME-8856825">
    <property type="pathway name" value="Cargo recognition for clathrin-mediated endocytosis"/>
</dbReference>
<dbReference type="Reactome" id="R-DME-8856828">
    <property type="pathway name" value="Clathrin-mediated endocytosis"/>
</dbReference>
<dbReference type="BioGRID-ORCS" id="140439">
    <property type="hits" value="0 hits in 3 CRISPR screens"/>
</dbReference>
<dbReference type="GenomeRNAi" id="140439"/>
<dbReference type="PRO" id="PR:Q9NDM2"/>
<dbReference type="Proteomes" id="UP000000803">
    <property type="component" value="Chromosome X"/>
</dbReference>
<dbReference type="Bgee" id="FBgn0046687">
    <property type="expression patterns" value="Expressed in embryonic/larval hemocyte (Drosophila) and 126 other cell types or tissues"/>
</dbReference>
<dbReference type="ExpressionAtlas" id="Q9NDM2">
    <property type="expression patterns" value="baseline and differential"/>
</dbReference>
<dbReference type="GO" id="GO:0005938">
    <property type="term" value="C:cell cortex"/>
    <property type="evidence" value="ECO:0000314"/>
    <property type="project" value="FlyBase"/>
</dbReference>
<dbReference type="GO" id="GO:0016020">
    <property type="term" value="C:membrane"/>
    <property type="evidence" value="ECO:0000250"/>
    <property type="project" value="FlyBase"/>
</dbReference>
<dbReference type="GO" id="GO:0005886">
    <property type="term" value="C:plasma membrane"/>
    <property type="evidence" value="ECO:0007669"/>
    <property type="project" value="UniProtKB-SubCell"/>
</dbReference>
<dbReference type="GO" id="GO:0004930">
    <property type="term" value="F:G protein-coupled receptor activity"/>
    <property type="evidence" value="ECO:0000250"/>
    <property type="project" value="FlyBase"/>
</dbReference>
<dbReference type="GO" id="GO:0035234">
    <property type="term" value="P:ectopic germ cell programmed cell death"/>
    <property type="evidence" value="ECO:0000304"/>
    <property type="project" value="FlyBase"/>
</dbReference>
<dbReference type="GO" id="GO:0007186">
    <property type="term" value="P:G protein-coupled receptor signaling pathway"/>
    <property type="evidence" value="ECO:0000250"/>
    <property type="project" value="FlyBase"/>
</dbReference>
<dbReference type="GO" id="GO:0007281">
    <property type="term" value="P:germ cell development"/>
    <property type="evidence" value="ECO:0000315"/>
    <property type="project" value="FlyBase"/>
</dbReference>
<dbReference type="GO" id="GO:0008354">
    <property type="term" value="P:germ cell migration"/>
    <property type="evidence" value="ECO:0000315"/>
    <property type="project" value="FlyBase"/>
</dbReference>
<dbReference type="CDD" id="cd15210">
    <property type="entry name" value="7tmA_GPR84-like"/>
    <property type="match status" value="1"/>
</dbReference>
<dbReference type="FunFam" id="1.20.1070.10:FF:000312">
    <property type="entry name" value="protein trapped in endoderm-1"/>
    <property type="match status" value="1"/>
</dbReference>
<dbReference type="Gene3D" id="1.20.1070.10">
    <property type="entry name" value="Rhodopsin 7-helix transmembrane proteins"/>
    <property type="match status" value="1"/>
</dbReference>
<dbReference type="InterPro" id="IPR000276">
    <property type="entry name" value="GPCR_Rhodpsn"/>
</dbReference>
<dbReference type="InterPro" id="IPR017452">
    <property type="entry name" value="GPCR_Rhodpsn_7TM"/>
</dbReference>
<dbReference type="PANTHER" id="PTHR24228">
    <property type="entry name" value="B2 BRADYKININ RECEPTOR/ANGIOTENSIN II RECEPTOR"/>
    <property type="match status" value="1"/>
</dbReference>
<dbReference type="PANTHER" id="PTHR24228:SF71">
    <property type="entry name" value="PROTEIN TRAPPED IN ENDODERM-1"/>
    <property type="match status" value="1"/>
</dbReference>
<dbReference type="Pfam" id="PF00001">
    <property type="entry name" value="7tm_1"/>
    <property type="match status" value="1"/>
</dbReference>
<dbReference type="PRINTS" id="PR00237">
    <property type="entry name" value="GPCRRHODOPSN"/>
</dbReference>
<dbReference type="SMART" id="SM01381">
    <property type="entry name" value="7TM_GPCR_Srsx"/>
    <property type="match status" value="1"/>
</dbReference>
<dbReference type="SUPFAM" id="SSF81321">
    <property type="entry name" value="Family A G protein-coupled receptor-like"/>
    <property type="match status" value="1"/>
</dbReference>
<dbReference type="PROSITE" id="PS00237">
    <property type="entry name" value="G_PROTEIN_RECEP_F1_1"/>
    <property type="match status" value="1"/>
</dbReference>
<dbReference type="PROSITE" id="PS50262">
    <property type="entry name" value="G_PROTEIN_RECEP_F1_2"/>
    <property type="match status" value="1"/>
</dbReference>
<keyword id="KW-1003">Cell membrane</keyword>
<keyword id="KW-0297">G-protein coupled receptor</keyword>
<keyword id="KW-0325">Glycoprotein</keyword>
<keyword id="KW-0472">Membrane</keyword>
<keyword id="KW-0597">Phosphoprotein</keyword>
<keyword id="KW-0675">Receptor</keyword>
<keyword id="KW-1185">Reference proteome</keyword>
<keyword id="KW-0807">Transducer</keyword>
<keyword id="KW-0812">Transmembrane</keyword>
<keyword id="KW-1133">Transmembrane helix</keyword>
<organism>
    <name type="scientific">Drosophila melanogaster</name>
    <name type="common">Fruit fly</name>
    <dbReference type="NCBI Taxonomy" id="7227"/>
    <lineage>
        <taxon>Eukaryota</taxon>
        <taxon>Metazoa</taxon>
        <taxon>Ecdysozoa</taxon>
        <taxon>Arthropoda</taxon>
        <taxon>Hexapoda</taxon>
        <taxon>Insecta</taxon>
        <taxon>Pterygota</taxon>
        <taxon>Neoptera</taxon>
        <taxon>Endopterygota</taxon>
        <taxon>Diptera</taxon>
        <taxon>Brachycera</taxon>
        <taxon>Muscomorpha</taxon>
        <taxon>Ephydroidea</taxon>
        <taxon>Drosophilidae</taxon>
        <taxon>Drosophila</taxon>
        <taxon>Sophophora</taxon>
    </lineage>
</organism>
<comment type="function">
    <text evidence="3">Essential for the first active step of germ cell migration: transepithelial migration of germ cells through the posterior midgut (PMG) epithelium.</text>
</comment>
<comment type="subcellular location">
    <subcellularLocation>
        <location evidence="5">Cell membrane</location>
        <topology evidence="5">Multi-pass membrane protein</topology>
    </subcellularLocation>
</comment>
<comment type="tissue specificity">
    <text evidence="3">In embryos, expression is seen at highest levels in the cuprophilic cells and at lower levels in the amnioserosa, developing CNS, cardiac mesoderm primordium and midline glia.</text>
</comment>
<comment type="developmental stage">
    <text evidence="3">Expressed both maternally and zygotically throughout embryo to adult stages.</text>
</comment>
<comment type="disruption phenotype">
    <text evidence="3">Most germ cells do not exit the posterior midgut (PMG) and remain clumped together within the midgut pocket. The few germ cells that do leave the midgut early migrate normally to the gonad.</text>
</comment>
<comment type="miscellaneous">
    <text evidence="6 7">Overexpression of the Tre1 gene restores the taste sensitivity to trehalose in a Tre1 mutant (PubMed:10884225). This experiment cannot be explained given that other authors demonstrate that trehalose sensitivity maps to the adjacent gene, Gr5a (PubMed:14691551).</text>
</comment>
<comment type="similarity">
    <text evidence="2">Belongs to the G-protein coupled receptor 1 family.</text>
</comment>
<feature type="chain" id="PRO_0000069672" description="Protein trapped in endoderm-1">
    <location>
        <begin position="1"/>
        <end position="392"/>
    </location>
</feature>
<feature type="topological domain" description="Extracellular" evidence="1">
    <location>
        <begin position="1"/>
        <end position="39"/>
    </location>
</feature>
<feature type="transmembrane region" description="Helical; Name=1" evidence="1">
    <location>
        <begin position="40"/>
        <end position="60"/>
    </location>
</feature>
<feature type="topological domain" description="Cytoplasmic" evidence="1">
    <location>
        <begin position="61"/>
        <end position="73"/>
    </location>
</feature>
<feature type="transmembrane region" description="Helical; Name=2" evidence="1">
    <location>
        <begin position="74"/>
        <end position="94"/>
    </location>
</feature>
<feature type="topological domain" description="Extracellular" evidence="1">
    <location>
        <begin position="95"/>
        <end position="110"/>
    </location>
</feature>
<feature type="transmembrane region" description="Helical; Name=3" evidence="1">
    <location>
        <begin position="111"/>
        <end position="131"/>
    </location>
</feature>
<feature type="topological domain" description="Cytoplasmic" evidence="1">
    <location>
        <begin position="132"/>
        <end position="156"/>
    </location>
</feature>
<feature type="transmembrane region" description="Helical; Name=4" evidence="1">
    <location>
        <begin position="157"/>
        <end position="177"/>
    </location>
</feature>
<feature type="topological domain" description="Extracellular" evidence="1">
    <location>
        <begin position="178"/>
        <end position="202"/>
    </location>
</feature>
<feature type="transmembrane region" description="Helical; Name=5" evidence="1">
    <location>
        <begin position="203"/>
        <end position="223"/>
    </location>
</feature>
<feature type="topological domain" description="Cytoplasmic" evidence="1">
    <location>
        <begin position="224"/>
        <end position="268"/>
    </location>
</feature>
<feature type="transmembrane region" description="Helical; Name=6" evidence="1">
    <location>
        <begin position="269"/>
        <end position="289"/>
    </location>
</feature>
<feature type="topological domain" description="Extracellular" evidence="1">
    <location>
        <begin position="290"/>
        <end position="302"/>
    </location>
</feature>
<feature type="transmembrane region" description="Helical; Name=7" evidence="1">
    <location>
        <begin position="303"/>
        <end position="323"/>
    </location>
</feature>
<feature type="topological domain" description="Cytoplasmic" evidence="1">
    <location>
        <begin position="324"/>
        <end position="392"/>
    </location>
</feature>
<feature type="modified residue" description="Phosphoserine" evidence="4">
    <location>
        <position position="359"/>
    </location>
</feature>
<feature type="modified residue" description="Phosphoserine" evidence="4">
    <location>
        <position position="362"/>
    </location>
</feature>
<feature type="modified residue" description="Phosphoserine" evidence="4">
    <location>
        <position position="366"/>
    </location>
</feature>
<feature type="modified residue" description="Phosphothreonine" evidence="4">
    <location>
        <position position="372"/>
    </location>
</feature>
<feature type="glycosylation site" description="N-linked (GlcNAc...) asparagine" evidence="1">
    <location>
        <position position="298"/>
    </location>
</feature>
<feature type="sequence variant" description="In strain: HG84, Singapore and w cv.">
    <original>M</original>
    <variation>MDMGMGM</variation>
    <location>
        <position position="7"/>
    </location>
</feature>
<feature type="sequence variant" description="In strain: HG84, Singapore and w cv.">
    <original>F</original>
    <variation>I</variation>
    <location>
        <position position="12"/>
    </location>
</feature>
<feature type="sequence variant" description="In strain: Shanghai.">
    <location>
        <begin position="95"/>
        <end position="100"/>
    </location>
</feature>
<feature type="sequence variant" description="In strain: Shanghai and Tananarive.">
    <original>L</original>
    <variation>M</variation>
    <location>
        <position position="348"/>
    </location>
</feature>
<feature type="sequence conflict" description="In Ref. 1; BAA95353." evidence="5" ref="1">
    <original>L</original>
    <variation>P</variation>
    <location>
        <position position="226"/>
    </location>
</feature>
<proteinExistence type="evidence at protein level"/>
<reference key="1">
    <citation type="journal article" date="2000" name="Science">
        <title>Molecular identification of a taste receptor gene for trehalose in Drosophila.</title>
        <authorList>
            <person name="Ishimoto H."/>
            <person name="Matsumoto A."/>
            <person name="Tanimura T."/>
        </authorList>
    </citation>
    <scope>NUCLEOTIDE SEQUENCE [MRNA]</scope>
    <source>
        <tissue>Labial palp</tissue>
    </source>
</reference>
<reference key="2">
    <citation type="journal article" date="2001" name="Curr. Biol.">
        <title>Trehalose sensitivity in Drosophila correlates with mutations in and expression of the gustatory receptor gene Gr5a.</title>
        <authorList>
            <person name="Ueno K."/>
            <person name="Ohta M."/>
            <person name="Morita H."/>
            <person name="Mikuni Y."/>
            <person name="Nakajima S."/>
            <person name="Yamamoto K."/>
            <person name="Isono K."/>
        </authorList>
    </citation>
    <scope>NUCLEOTIDE SEQUENCE [GENOMIC DNA / MRNA]</scope>
    <scope>VARIANTS</scope>
    <source>
        <strain>HG84</strain>
        <strain>Shanghai</strain>
        <strain>Singapore</strain>
        <strain>Tananarive</strain>
        <strain>w cv</strain>
        <strain>w cx</strain>
    </source>
</reference>
<reference key="3">
    <citation type="submission" date="2006-05" db="EMBL/GenBank/DDBJ databases">
        <authorList>
            <person name="Ohta M."/>
            <person name="Isono K."/>
        </authorList>
    </citation>
    <scope>SEQUENCE REVISION OF 95-100</scope>
    <source>
        <strain>Shanghai</strain>
    </source>
</reference>
<reference key="4">
    <citation type="journal article" date="2000" name="Science">
        <title>The genome sequence of Drosophila melanogaster.</title>
        <authorList>
            <person name="Adams M.D."/>
            <person name="Celniker S.E."/>
            <person name="Holt R.A."/>
            <person name="Evans C.A."/>
            <person name="Gocayne J.D."/>
            <person name="Amanatides P.G."/>
            <person name="Scherer S.E."/>
            <person name="Li P.W."/>
            <person name="Hoskins R.A."/>
            <person name="Galle R.F."/>
            <person name="George R.A."/>
            <person name="Lewis S.E."/>
            <person name="Richards S."/>
            <person name="Ashburner M."/>
            <person name="Henderson S.N."/>
            <person name="Sutton G.G."/>
            <person name="Wortman J.R."/>
            <person name="Yandell M.D."/>
            <person name="Zhang Q."/>
            <person name="Chen L.X."/>
            <person name="Brandon R.C."/>
            <person name="Rogers Y.-H.C."/>
            <person name="Blazej R.G."/>
            <person name="Champe M."/>
            <person name="Pfeiffer B.D."/>
            <person name="Wan K.H."/>
            <person name="Doyle C."/>
            <person name="Baxter E.G."/>
            <person name="Helt G."/>
            <person name="Nelson C.R."/>
            <person name="Miklos G.L.G."/>
            <person name="Abril J.F."/>
            <person name="Agbayani A."/>
            <person name="An H.-J."/>
            <person name="Andrews-Pfannkoch C."/>
            <person name="Baldwin D."/>
            <person name="Ballew R.M."/>
            <person name="Basu A."/>
            <person name="Baxendale J."/>
            <person name="Bayraktaroglu L."/>
            <person name="Beasley E.M."/>
            <person name="Beeson K.Y."/>
            <person name="Benos P.V."/>
            <person name="Berman B.P."/>
            <person name="Bhandari D."/>
            <person name="Bolshakov S."/>
            <person name="Borkova D."/>
            <person name="Botchan M.R."/>
            <person name="Bouck J."/>
            <person name="Brokstein P."/>
            <person name="Brottier P."/>
            <person name="Burtis K.C."/>
            <person name="Busam D.A."/>
            <person name="Butler H."/>
            <person name="Cadieu E."/>
            <person name="Center A."/>
            <person name="Chandra I."/>
            <person name="Cherry J.M."/>
            <person name="Cawley S."/>
            <person name="Dahlke C."/>
            <person name="Davenport L.B."/>
            <person name="Davies P."/>
            <person name="de Pablos B."/>
            <person name="Delcher A."/>
            <person name="Deng Z."/>
            <person name="Mays A.D."/>
            <person name="Dew I."/>
            <person name="Dietz S.M."/>
            <person name="Dodson K."/>
            <person name="Doup L.E."/>
            <person name="Downes M."/>
            <person name="Dugan-Rocha S."/>
            <person name="Dunkov B.C."/>
            <person name="Dunn P."/>
            <person name="Durbin K.J."/>
            <person name="Evangelista C.C."/>
            <person name="Ferraz C."/>
            <person name="Ferriera S."/>
            <person name="Fleischmann W."/>
            <person name="Fosler C."/>
            <person name="Gabrielian A.E."/>
            <person name="Garg N.S."/>
            <person name="Gelbart W.M."/>
            <person name="Glasser K."/>
            <person name="Glodek A."/>
            <person name="Gong F."/>
            <person name="Gorrell J.H."/>
            <person name="Gu Z."/>
            <person name="Guan P."/>
            <person name="Harris M."/>
            <person name="Harris N.L."/>
            <person name="Harvey D.A."/>
            <person name="Heiman T.J."/>
            <person name="Hernandez J.R."/>
            <person name="Houck J."/>
            <person name="Hostin D."/>
            <person name="Houston K.A."/>
            <person name="Howland T.J."/>
            <person name="Wei M.-H."/>
            <person name="Ibegwam C."/>
            <person name="Jalali M."/>
            <person name="Kalush F."/>
            <person name="Karpen G.H."/>
            <person name="Ke Z."/>
            <person name="Kennison J.A."/>
            <person name="Ketchum K.A."/>
            <person name="Kimmel B.E."/>
            <person name="Kodira C.D."/>
            <person name="Kraft C.L."/>
            <person name="Kravitz S."/>
            <person name="Kulp D."/>
            <person name="Lai Z."/>
            <person name="Lasko P."/>
            <person name="Lei Y."/>
            <person name="Levitsky A.A."/>
            <person name="Li J.H."/>
            <person name="Li Z."/>
            <person name="Liang Y."/>
            <person name="Lin X."/>
            <person name="Liu X."/>
            <person name="Mattei B."/>
            <person name="McIntosh T.C."/>
            <person name="McLeod M.P."/>
            <person name="McPherson D."/>
            <person name="Merkulov G."/>
            <person name="Milshina N.V."/>
            <person name="Mobarry C."/>
            <person name="Morris J."/>
            <person name="Moshrefi A."/>
            <person name="Mount S.M."/>
            <person name="Moy M."/>
            <person name="Murphy B."/>
            <person name="Murphy L."/>
            <person name="Muzny D.M."/>
            <person name="Nelson D.L."/>
            <person name="Nelson D.R."/>
            <person name="Nelson K.A."/>
            <person name="Nixon K."/>
            <person name="Nusskern D.R."/>
            <person name="Pacleb J.M."/>
            <person name="Palazzolo M."/>
            <person name="Pittman G.S."/>
            <person name="Pan S."/>
            <person name="Pollard J."/>
            <person name="Puri V."/>
            <person name="Reese M.G."/>
            <person name="Reinert K."/>
            <person name="Remington K."/>
            <person name="Saunders R.D.C."/>
            <person name="Scheeler F."/>
            <person name="Shen H."/>
            <person name="Shue B.C."/>
            <person name="Siden-Kiamos I."/>
            <person name="Simpson M."/>
            <person name="Skupski M.P."/>
            <person name="Smith T.J."/>
            <person name="Spier E."/>
            <person name="Spradling A.C."/>
            <person name="Stapleton M."/>
            <person name="Strong R."/>
            <person name="Sun E."/>
            <person name="Svirskas R."/>
            <person name="Tector C."/>
            <person name="Turner R."/>
            <person name="Venter E."/>
            <person name="Wang A.H."/>
            <person name="Wang X."/>
            <person name="Wang Z.-Y."/>
            <person name="Wassarman D.A."/>
            <person name="Weinstock G.M."/>
            <person name="Weissenbach J."/>
            <person name="Williams S.M."/>
            <person name="Woodage T."/>
            <person name="Worley K.C."/>
            <person name="Wu D."/>
            <person name="Yang S."/>
            <person name="Yao Q.A."/>
            <person name="Ye J."/>
            <person name="Yeh R.-F."/>
            <person name="Zaveri J.S."/>
            <person name="Zhan M."/>
            <person name="Zhang G."/>
            <person name="Zhao Q."/>
            <person name="Zheng L."/>
            <person name="Zheng X.H."/>
            <person name="Zhong F.N."/>
            <person name="Zhong W."/>
            <person name="Zhou X."/>
            <person name="Zhu S.C."/>
            <person name="Zhu X."/>
            <person name="Smith H.O."/>
            <person name="Gibbs R.A."/>
            <person name="Myers E.W."/>
            <person name="Rubin G.M."/>
            <person name="Venter J.C."/>
        </authorList>
    </citation>
    <scope>NUCLEOTIDE SEQUENCE [LARGE SCALE GENOMIC DNA]</scope>
    <source>
        <strain>Berkeley</strain>
    </source>
</reference>
<reference key="5">
    <citation type="journal article" date="2002" name="Genome Biol.">
        <title>Annotation of the Drosophila melanogaster euchromatic genome: a systematic review.</title>
        <authorList>
            <person name="Misra S."/>
            <person name="Crosby M.A."/>
            <person name="Mungall C.J."/>
            <person name="Matthews B.B."/>
            <person name="Campbell K.S."/>
            <person name="Hradecky P."/>
            <person name="Huang Y."/>
            <person name="Kaminker J.S."/>
            <person name="Millburn G.H."/>
            <person name="Prochnik S.E."/>
            <person name="Smith C.D."/>
            <person name="Tupy J.L."/>
            <person name="Whitfield E.J."/>
            <person name="Bayraktaroglu L."/>
            <person name="Berman B.P."/>
            <person name="Bettencourt B.R."/>
            <person name="Celniker S.E."/>
            <person name="de Grey A.D.N.J."/>
            <person name="Drysdale R.A."/>
            <person name="Harris N.L."/>
            <person name="Richter J."/>
            <person name="Russo S."/>
            <person name="Schroeder A.J."/>
            <person name="Shu S.Q."/>
            <person name="Stapleton M."/>
            <person name="Yamada C."/>
            <person name="Ashburner M."/>
            <person name="Gelbart W.M."/>
            <person name="Rubin G.M."/>
            <person name="Lewis S.E."/>
        </authorList>
    </citation>
    <scope>GENOME REANNOTATION</scope>
    <source>
        <strain>Berkeley</strain>
    </source>
</reference>
<reference key="6">
    <citation type="journal article" date="2002" name="Genome Biol.">
        <title>A Drosophila full-length cDNA resource.</title>
        <authorList>
            <person name="Stapleton M."/>
            <person name="Carlson J.W."/>
            <person name="Brokstein P."/>
            <person name="Yu C."/>
            <person name="Champe M."/>
            <person name="George R.A."/>
            <person name="Guarin H."/>
            <person name="Kronmiller B."/>
            <person name="Pacleb J.M."/>
            <person name="Park S."/>
            <person name="Wan K.H."/>
            <person name="Rubin G.M."/>
            <person name="Celniker S.E."/>
        </authorList>
    </citation>
    <scope>NUCLEOTIDE SEQUENCE [LARGE SCALE MRNA]</scope>
    <source>
        <strain>Berkeley</strain>
        <tissue>Embryo</tissue>
    </source>
</reference>
<reference key="7">
    <citation type="journal article" date="2003" name="PLoS Biol.">
        <title>Tre1, a G protein-coupled receptor, directs transepithelial migration of Drosophila germ cells.</title>
        <authorList>
            <person name="Kunwar P.S."/>
            <person name="Starz-Gaiano M."/>
            <person name="Bainton R.J."/>
            <person name="Heberlein U."/>
            <person name="Lehmann R."/>
        </authorList>
    </citation>
    <scope>FUNCTION</scope>
    <scope>TISSUE SPECIFICITY</scope>
    <scope>DEVELOPMENTAL STAGE</scope>
    <scope>DISRUPTION PHENOTYPE</scope>
</reference>
<reference key="8">
    <citation type="journal article" date="2008" name="J. Proteome Res.">
        <title>Phosphoproteome analysis of Drosophila melanogaster embryos.</title>
        <authorList>
            <person name="Zhai B."/>
            <person name="Villen J."/>
            <person name="Beausoleil S.A."/>
            <person name="Mintseris J."/>
            <person name="Gygi S.P."/>
        </authorList>
    </citation>
    <scope>PHOSPHORYLATION [LARGE SCALE ANALYSIS] AT SER-359; SER-362; SER-366 AND THR-372</scope>
    <scope>IDENTIFICATION BY MASS SPECTROMETRY</scope>
    <source>
        <tissue>Embryo</tissue>
    </source>
</reference>